<proteinExistence type="inferred from homology"/>
<reference key="1">
    <citation type="submission" date="1992-01" db="EMBL/GenBank/DDBJ databases">
        <authorList>
            <person name="Doerksen A.H."/>
            <person name="Strauss S."/>
            <person name="Price R."/>
        </authorList>
    </citation>
    <scope>NUCLEOTIDE SEQUENCE [GENOMIC DNA]</scope>
</reference>
<reference key="2">
    <citation type="journal article" date="2009" name="Mol. Phylogenet. Evol.">
        <title>Evolution of reduced and compact chloroplast genomes (cpDNAs) in gnetophytes: Selection toward a lower-cost strategy.</title>
        <authorList>
            <person name="Wu C.-S."/>
            <person name="Lai Y.-T."/>
            <person name="Lin C.-P."/>
            <person name="Wang Y.-N."/>
            <person name="Chaw S.-M."/>
        </authorList>
    </citation>
    <scope>NUCLEOTIDE SEQUENCE [LARGE SCALE GENOMIC DNA]</scope>
</reference>
<sequence>MSPKTETKASVGFKAGVKDYRLTYYTPEYQTKDTDILAAFRVTPQPGVPPEEAGAAVAAESSTGTWTTVWTDGLTSLDRYKGRCYDIEPVPGEESQFIAYVAYPLDLFEEGSVTNLFTSIVGNVFGFKALRALRLEDLRIPPSYSKTFQGPPHGIQVERDKLNKYGRPLLGCTIKPKLGLSAKNYGRAVYECLRGGLDFTKDDENVNSQPFMRWRDRFVFCAEALNKAQAETGEIKGHYLNATAGTCEEMMKRAIFARELGVPIVMHDYLTGGFTANTSLAHYCRDNGLLLHIHRAMHAVIDRQRNHGMHFRVLAKALRMSGGDHIHAGTVVGKLEGERDVTLGFVDLLRDDFIEKDRSRGIYFTQDWVSMPGVLPVASGGIHVWHMPALTEIFGDDSVLQFGGGTLGHPWGNAPGAVANRVAVEACVQARNEGRDLAREGNEVIREAAKWSPELAAACEVWKEIKFEFETIDYL</sequence>
<organism>
    <name type="scientific">Keteleeria davidiana</name>
    <name type="common">David's keteleeria</name>
    <name type="synonym">Pseudotsuga davidiana</name>
    <dbReference type="NCBI Taxonomy" id="3324"/>
    <lineage>
        <taxon>Eukaryota</taxon>
        <taxon>Viridiplantae</taxon>
        <taxon>Streptophyta</taxon>
        <taxon>Embryophyta</taxon>
        <taxon>Tracheophyta</taxon>
        <taxon>Spermatophyta</taxon>
        <taxon>Pinopsida</taxon>
        <taxon>Pinidae</taxon>
        <taxon>Conifers I</taxon>
        <taxon>Pinales</taxon>
        <taxon>Pinaceae</taxon>
        <taxon>Keteleeria</taxon>
    </lineage>
</organism>
<protein>
    <recommendedName>
        <fullName evidence="1">Ribulose bisphosphate carboxylase large chain</fullName>
        <shortName evidence="1">RuBisCO large subunit</shortName>
        <ecNumber evidence="1">4.1.1.39</ecNumber>
    </recommendedName>
</protein>
<comment type="function">
    <text evidence="1">RuBisCO catalyzes two reactions: the carboxylation of D-ribulose 1,5-bisphosphate, the primary event in carbon dioxide fixation, as well as the oxidative fragmentation of the pentose substrate in the photorespiration process. Both reactions occur simultaneously and in competition at the same active site.</text>
</comment>
<comment type="catalytic activity">
    <reaction evidence="1">
        <text>2 (2R)-3-phosphoglycerate + 2 H(+) = D-ribulose 1,5-bisphosphate + CO2 + H2O</text>
        <dbReference type="Rhea" id="RHEA:23124"/>
        <dbReference type="ChEBI" id="CHEBI:15377"/>
        <dbReference type="ChEBI" id="CHEBI:15378"/>
        <dbReference type="ChEBI" id="CHEBI:16526"/>
        <dbReference type="ChEBI" id="CHEBI:57870"/>
        <dbReference type="ChEBI" id="CHEBI:58272"/>
        <dbReference type="EC" id="4.1.1.39"/>
    </reaction>
</comment>
<comment type="catalytic activity">
    <reaction evidence="1">
        <text>D-ribulose 1,5-bisphosphate + O2 = 2-phosphoglycolate + (2R)-3-phosphoglycerate + 2 H(+)</text>
        <dbReference type="Rhea" id="RHEA:36631"/>
        <dbReference type="ChEBI" id="CHEBI:15378"/>
        <dbReference type="ChEBI" id="CHEBI:15379"/>
        <dbReference type="ChEBI" id="CHEBI:57870"/>
        <dbReference type="ChEBI" id="CHEBI:58033"/>
        <dbReference type="ChEBI" id="CHEBI:58272"/>
    </reaction>
</comment>
<comment type="cofactor">
    <cofactor evidence="1">
        <name>Mg(2+)</name>
        <dbReference type="ChEBI" id="CHEBI:18420"/>
    </cofactor>
    <text evidence="1">Binds 1 Mg(2+) ion per subunit.</text>
</comment>
<comment type="subunit">
    <text evidence="1">Heterohexadecamer of 8 large chains and 8 small chains; disulfide-linked. The disulfide link is formed within the large subunit homodimers.</text>
</comment>
<comment type="subcellular location">
    <subcellularLocation>
        <location>Plastid</location>
        <location>Chloroplast</location>
    </subcellularLocation>
</comment>
<comment type="PTM">
    <text evidence="1">The disulfide bond which can form in the large chain dimeric partners within the hexadecamer appears to be associated with oxidative stress and protein turnover.</text>
</comment>
<comment type="miscellaneous">
    <text evidence="1">The basic functional RuBisCO is composed of a large chain homodimer in a 'head-to-tail' conformation. In form I RuBisCO this homodimer is arranged in a barrel-like tetramer with the small subunits forming a tetrameric 'cap' on each end of the 'barrel'.</text>
</comment>
<comment type="similarity">
    <text evidence="1">Belongs to the RuBisCO large chain family. Type I subfamily.</text>
</comment>
<feature type="propeptide" id="PRO_0000031269" evidence="1">
    <location>
        <begin position="1"/>
        <end position="2"/>
    </location>
</feature>
<feature type="chain" id="PRO_0000031270" description="Ribulose bisphosphate carboxylase large chain">
    <location>
        <begin position="3"/>
        <end position="475"/>
    </location>
</feature>
<feature type="active site" description="Proton acceptor" evidence="1">
    <location>
        <position position="175"/>
    </location>
</feature>
<feature type="active site" description="Proton acceptor" evidence="1">
    <location>
        <position position="294"/>
    </location>
</feature>
<feature type="binding site" description="in homodimeric partner" evidence="1">
    <location>
        <position position="123"/>
    </location>
    <ligand>
        <name>substrate</name>
    </ligand>
</feature>
<feature type="binding site" evidence="1">
    <location>
        <position position="173"/>
    </location>
    <ligand>
        <name>substrate</name>
    </ligand>
</feature>
<feature type="binding site" evidence="1">
    <location>
        <position position="177"/>
    </location>
    <ligand>
        <name>substrate</name>
    </ligand>
</feature>
<feature type="binding site" description="via carbamate group" evidence="1">
    <location>
        <position position="201"/>
    </location>
    <ligand>
        <name>Mg(2+)</name>
        <dbReference type="ChEBI" id="CHEBI:18420"/>
    </ligand>
</feature>
<feature type="binding site" evidence="1">
    <location>
        <position position="203"/>
    </location>
    <ligand>
        <name>Mg(2+)</name>
        <dbReference type="ChEBI" id="CHEBI:18420"/>
    </ligand>
</feature>
<feature type="binding site" evidence="1">
    <location>
        <position position="204"/>
    </location>
    <ligand>
        <name>Mg(2+)</name>
        <dbReference type="ChEBI" id="CHEBI:18420"/>
    </ligand>
</feature>
<feature type="binding site" evidence="1">
    <location>
        <position position="295"/>
    </location>
    <ligand>
        <name>substrate</name>
    </ligand>
</feature>
<feature type="binding site" evidence="1">
    <location>
        <position position="327"/>
    </location>
    <ligand>
        <name>substrate</name>
    </ligand>
</feature>
<feature type="binding site" evidence="1">
    <location>
        <position position="379"/>
    </location>
    <ligand>
        <name>substrate</name>
    </ligand>
</feature>
<feature type="site" description="Transition state stabilizer" evidence="1">
    <location>
        <position position="334"/>
    </location>
</feature>
<feature type="modified residue" description="N-acetylproline" evidence="1">
    <location>
        <position position="3"/>
    </location>
</feature>
<feature type="modified residue" description="N6,N6,N6-trimethyllysine" evidence="1">
    <location>
        <position position="14"/>
    </location>
</feature>
<feature type="modified residue" description="N6-carboxylysine" evidence="1">
    <location>
        <position position="201"/>
    </location>
</feature>
<feature type="disulfide bond" description="Interchain; in linked form" evidence="1">
    <location>
        <position position="247"/>
    </location>
</feature>
<feature type="sequence conflict" description="In Ref. 1; CAA45204." evidence="2" ref="1">
    <original>S</original>
    <variation>A</variation>
    <location>
        <position position="143"/>
    </location>
</feature>
<feature type="sequence conflict" description="In Ref. 1; CAA45204." evidence="2" ref="1">
    <original>I</original>
    <variation>T</variation>
    <location>
        <position position="155"/>
    </location>
</feature>
<feature type="sequence conflict" description="In Ref. 1; CAA45204." evidence="2" ref="1">
    <original>D</original>
    <variation>H</variation>
    <location>
        <position position="216"/>
    </location>
</feature>
<feature type="sequence conflict" description="In Ref. 1; CAA45204." evidence="2" ref="1">
    <original>T</original>
    <variation>A</variation>
    <location>
        <position position="471"/>
    </location>
</feature>
<geneLocation type="chloroplast"/>
<keyword id="KW-0007">Acetylation</keyword>
<keyword id="KW-0113">Calvin cycle</keyword>
<keyword id="KW-0120">Carbon dioxide fixation</keyword>
<keyword id="KW-0150">Chloroplast</keyword>
<keyword id="KW-1015">Disulfide bond</keyword>
<keyword id="KW-0456">Lyase</keyword>
<keyword id="KW-0460">Magnesium</keyword>
<keyword id="KW-0479">Metal-binding</keyword>
<keyword id="KW-0488">Methylation</keyword>
<keyword id="KW-0503">Monooxygenase</keyword>
<keyword id="KW-0560">Oxidoreductase</keyword>
<keyword id="KW-0601">Photorespiration</keyword>
<keyword id="KW-0602">Photosynthesis</keyword>
<keyword id="KW-0934">Plastid</keyword>
<gene>
    <name evidence="1" type="primary">rbcL</name>
</gene>
<accession>P26960</accession>
<accession>B7ZIP3</accession>
<name>RBL_KETDA</name>
<evidence type="ECO:0000255" key="1">
    <source>
        <dbReference type="HAMAP-Rule" id="MF_01338"/>
    </source>
</evidence>
<evidence type="ECO:0000305" key="2"/>
<dbReference type="EC" id="4.1.1.39" evidence="1"/>
<dbReference type="EMBL" id="X63664">
    <property type="protein sequence ID" value="CAA45204.1"/>
    <property type="molecule type" value="Genomic_DNA"/>
</dbReference>
<dbReference type="EMBL" id="AP010820">
    <property type="protein sequence ID" value="BAH11410.1"/>
    <property type="molecule type" value="Genomic_DNA"/>
</dbReference>
<dbReference type="PIR" id="S19216">
    <property type="entry name" value="RKKHLE"/>
</dbReference>
<dbReference type="RefSeq" id="YP_002519545.1">
    <property type="nucleotide sequence ID" value="NC_011930.1"/>
</dbReference>
<dbReference type="SMR" id="P26960"/>
<dbReference type="GeneID" id="7367874"/>
<dbReference type="GO" id="GO:0009507">
    <property type="term" value="C:chloroplast"/>
    <property type="evidence" value="ECO:0007669"/>
    <property type="project" value="UniProtKB-SubCell"/>
</dbReference>
<dbReference type="GO" id="GO:0000287">
    <property type="term" value="F:magnesium ion binding"/>
    <property type="evidence" value="ECO:0007669"/>
    <property type="project" value="UniProtKB-UniRule"/>
</dbReference>
<dbReference type="GO" id="GO:0004497">
    <property type="term" value="F:monooxygenase activity"/>
    <property type="evidence" value="ECO:0007669"/>
    <property type="project" value="UniProtKB-KW"/>
</dbReference>
<dbReference type="GO" id="GO:0016984">
    <property type="term" value="F:ribulose-bisphosphate carboxylase activity"/>
    <property type="evidence" value="ECO:0007669"/>
    <property type="project" value="UniProtKB-UniRule"/>
</dbReference>
<dbReference type="GO" id="GO:0009853">
    <property type="term" value="P:photorespiration"/>
    <property type="evidence" value="ECO:0007669"/>
    <property type="project" value="UniProtKB-KW"/>
</dbReference>
<dbReference type="GO" id="GO:0019253">
    <property type="term" value="P:reductive pentose-phosphate cycle"/>
    <property type="evidence" value="ECO:0007669"/>
    <property type="project" value="UniProtKB-UniRule"/>
</dbReference>
<dbReference type="CDD" id="cd08212">
    <property type="entry name" value="RuBisCO_large_I"/>
    <property type="match status" value="1"/>
</dbReference>
<dbReference type="FunFam" id="3.20.20.110:FF:000001">
    <property type="entry name" value="Ribulose bisphosphate carboxylase large chain"/>
    <property type="match status" value="1"/>
</dbReference>
<dbReference type="FunFam" id="3.30.70.150:FF:000001">
    <property type="entry name" value="Ribulose bisphosphate carboxylase large chain"/>
    <property type="match status" value="1"/>
</dbReference>
<dbReference type="Gene3D" id="3.20.20.110">
    <property type="entry name" value="Ribulose bisphosphate carboxylase, large subunit, C-terminal domain"/>
    <property type="match status" value="1"/>
</dbReference>
<dbReference type="Gene3D" id="3.30.70.150">
    <property type="entry name" value="RuBisCO large subunit, N-terminal domain"/>
    <property type="match status" value="1"/>
</dbReference>
<dbReference type="HAMAP" id="MF_01338">
    <property type="entry name" value="RuBisCO_L_type1"/>
    <property type="match status" value="1"/>
</dbReference>
<dbReference type="InterPro" id="IPR033966">
    <property type="entry name" value="RuBisCO"/>
</dbReference>
<dbReference type="InterPro" id="IPR020878">
    <property type="entry name" value="RuBisCo_large_chain_AS"/>
</dbReference>
<dbReference type="InterPro" id="IPR000685">
    <property type="entry name" value="RuBisCO_lsu_C"/>
</dbReference>
<dbReference type="InterPro" id="IPR036376">
    <property type="entry name" value="RuBisCO_lsu_C_sf"/>
</dbReference>
<dbReference type="InterPro" id="IPR017443">
    <property type="entry name" value="RuBisCO_lsu_fd_N"/>
</dbReference>
<dbReference type="InterPro" id="IPR036422">
    <property type="entry name" value="RuBisCO_lsu_N_sf"/>
</dbReference>
<dbReference type="InterPro" id="IPR020888">
    <property type="entry name" value="RuBisCO_lsuI"/>
</dbReference>
<dbReference type="NCBIfam" id="NF003252">
    <property type="entry name" value="PRK04208.1"/>
    <property type="match status" value="1"/>
</dbReference>
<dbReference type="PANTHER" id="PTHR42704">
    <property type="entry name" value="RIBULOSE BISPHOSPHATE CARBOXYLASE"/>
    <property type="match status" value="1"/>
</dbReference>
<dbReference type="PANTHER" id="PTHR42704:SF15">
    <property type="entry name" value="RIBULOSE BISPHOSPHATE CARBOXYLASE LARGE CHAIN"/>
    <property type="match status" value="1"/>
</dbReference>
<dbReference type="Pfam" id="PF00016">
    <property type="entry name" value="RuBisCO_large"/>
    <property type="match status" value="1"/>
</dbReference>
<dbReference type="Pfam" id="PF02788">
    <property type="entry name" value="RuBisCO_large_N"/>
    <property type="match status" value="1"/>
</dbReference>
<dbReference type="SFLD" id="SFLDG01052">
    <property type="entry name" value="RuBisCO"/>
    <property type="match status" value="1"/>
</dbReference>
<dbReference type="SFLD" id="SFLDS00014">
    <property type="entry name" value="RuBisCO"/>
    <property type="match status" value="1"/>
</dbReference>
<dbReference type="SFLD" id="SFLDG00301">
    <property type="entry name" value="RuBisCO-like_proteins"/>
    <property type="match status" value="1"/>
</dbReference>
<dbReference type="SUPFAM" id="SSF51649">
    <property type="entry name" value="RuBisCo, C-terminal domain"/>
    <property type="match status" value="1"/>
</dbReference>
<dbReference type="SUPFAM" id="SSF54966">
    <property type="entry name" value="RuBisCO, large subunit, small (N-terminal) domain"/>
    <property type="match status" value="1"/>
</dbReference>
<dbReference type="PROSITE" id="PS00157">
    <property type="entry name" value="RUBISCO_LARGE"/>
    <property type="match status" value="1"/>
</dbReference>